<keyword id="KW-1185">Reference proteome</keyword>
<keyword id="KW-0687">Ribonucleoprotein</keyword>
<keyword id="KW-0689">Ribosomal protein</keyword>
<keyword id="KW-0694">RNA-binding</keyword>
<keyword id="KW-0699">rRNA-binding</keyword>
<gene>
    <name evidence="1" type="primary">rpsF</name>
    <name type="ordered locus">PSPTO_4933</name>
</gene>
<sequence length="141" mass="16343">MRHYEIIFLVHPDQSEQVGGMVERYTKLIEEDGGKIHRLEDWGRRQLAYAINNVHKAHYVMLNVECTGKALAELEDNFRYNDAVIRNLVIRRDEAVTGQSEMLKAEENRSERRERRDRPEHSDSADGDDGDNSDVSDNADE</sequence>
<protein>
    <recommendedName>
        <fullName evidence="1">Small ribosomal subunit protein bS6</fullName>
    </recommendedName>
    <alternativeName>
        <fullName evidence="3">30S ribosomal protein S6</fullName>
    </alternativeName>
</protein>
<accession>Q87VK3</accession>
<dbReference type="EMBL" id="AE016853">
    <property type="protein sequence ID" value="AAO58361.1"/>
    <property type="molecule type" value="Genomic_DNA"/>
</dbReference>
<dbReference type="RefSeq" id="NP_794666.1">
    <property type="nucleotide sequence ID" value="NC_004578.1"/>
</dbReference>
<dbReference type="RefSeq" id="WP_002551828.1">
    <property type="nucleotide sequence ID" value="NC_004578.1"/>
</dbReference>
<dbReference type="SMR" id="Q87VK3"/>
<dbReference type="STRING" id="223283.PSPTO_4933"/>
<dbReference type="GeneID" id="93657284"/>
<dbReference type="KEGG" id="pst:PSPTO_4933"/>
<dbReference type="PATRIC" id="fig|223283.9.peg.5047"/>
<dbReference type="eggNOG" id="COG0360">
    <property type="taxonomic scope" value="Bacteria"/>
</dbReference>
<dbReference type="HOGENOM" id="CLU_113441_6_1_6"/>
<dbReference type="OrthoDB" id="9812702at2"/>
<dbReference type="PhylomeDB" id="Q87VK3"/>
<dbReference type="Proteomes" id="UP000002515">
    <property type="component" value="Chromosome"/>
</dbReference>
<dbReference type="GO" id="GO:0022627">
    <property type="term" value="C:cytosolic small ribosomal subunit"/>
    <property type="evidence" value="ECO:0007669"/>
    <property type="project" value="TreeGrafter"/>
</dbReference>
<dbReference type="GO" id="GO:0070181">
    <property type="term" value="F:small ribosomal subunit rRNA binding"/>
    <property type="evidence" value="ECO:0007669"/>
    <property type="project" value="TreeGrafter"/>
</dbReference>
<dbReference type="GO" id="GO:0003735">
    <property type="term" value="F:structural constituent of ribosome"/>
    <property type="evidence" value="ECO:0007669"/>
    <property type="project" value="InterPro"/>
</dbReference>
<dbReference type="GO" id="GO:0006412">
    <property type="term" value="P:translation"/>
    <property type="evidence" value="ECO:0007669"/>
    <property type="project" value="UniProtKB-UniRule"/>
</dbReference>
<dbReference type="CDD" id="cd00473">
    <property type="entry name" value="bS6"/>
    <property type="match status" value="1"/>
</dbReference>
<dbReference type="FunFam" id="3.30.70.60:FF:000003">
    <property type="entry name" value="30S ribosomal protein S6"/>
    <property type="match status" value="1"/>
</dbReference>
<dbReference type="Gene3D" id="3.30.70.60">
    <property type="match status" value="1"/>
</dbReference>
<dbReference type="HAMAP" id="MF_00360">
    <property type="entry name" value="Ribosomal_bS6"/>
    <property type="match status" value="1"/>
</dbReference>
<dbReference type="InterPro" id="IPR000529">
    <property type="entry name" value="Ribosomal_bS6"/>
</dbReference>
<dbReference type="InterPro" id="IPR020815">
    <property type="entry name" value="Ribosomal_bS6_CS"/>
</dbReference>
<dbReference type="InterPro" id="IPR035980">
    <property type="entry name" value="Ribosomal_bS6_sf"/>
</dbReference>
<dbReference type="InterPro" id="IPR020814">
    <property type="entry name" value="Ribosomal_S6_plastid/chlpt"/>
</dbReference>
<dbReference type="InterPro" id="IPR014717">
    <property type="entry name" value="Transl_elong_EF1B/ribsomal_bS6"/>
</dbReference>
<dbReference type="NCBIfam" id="TIGR00166">
    <property type="entry name" value="S6"/>
    <property type="match status" value="1"/>
</dbReference>
<dbReference type="PANTHER" id="PTHR21011">
    <property type="entry name" value="MITOCHONDRIAL 28S RIBOSOMAL PROTEIN S6"/>
    <property type="match status" value="1"/>
</dbReference>
<dbReference type="PANTHER" id="PTHR21011:SF1">
    <property type="entry name" value="SMALL RIBOSOMAL SUBUNIT PROTEIN BS6M"/>
    <property type="match status" value="1"/>
</dbReference>
<dbReference type="Pfam" id="PF01250">
    <property type="entry name" value="Ribosomal_S6"/>
    <property type="match status" value="1"/>
</dbReference>
<dbReference type="SUPFAM" id="SSF54995">
    <property type="entry name" value="Ribosomal protein S6"/>
    <property type="match status" value="1"/>
</dbReference>
<dbReference type="PROSITE" id="PS01048">
    <property type="entry name" value="RIBOSOMAL_S6"/>
    <property type="match status" value="1"/>
</dbReference>
<organism>
    <name type="scientific">Pseudomonas syringae pv. tomato (strain ATCC BAA-871 / DC3000)</name>
    <dbReference type="NCBI Taxonomy" id="223283"/>
    <lineage>
        <taxon>Bacteria</taxon>
        <taxon>Pseudomonadati</taxon>
        <taxon>Pseudomonadota</taxon>
        <taxon>Gammaproteobacteria</taxon>
        <taxon>Pseudomonadales</taxon>
        <taxon>Pseudomonadaceae</taxon>
        <taxon>Pseudomonas</taxon>
    </lineage>
</organism>
<name>RS6_PSESM</name>
<reference key="1">
    <citation type="journal article" date="2003" name="Proc. Natl. Acad. Sci. U.S.A.">
        <title>The complete genome sequence of the Arabidopsis and tomato pathogen Pseudomonas syringae pv. tomato DC3000.</title>
        <authorList>
            <person name="Buell C.R."/>
            <person name="Joardar V."/>
            <person name="Lindeberg M."/>
            <person name="Selengut J."/>
            <person name="Paulsen I.T."/>
            <person name="Gwinn M.L."/>
            <person name="Dodson R.J."/>
            <person name="DeBoy R.T."/>
            <person name="Durkin A.S."/>
            <person name="Kolonay J.F."/>
            <person name="Madupu R."/>
            <person name="Daugherty S.C."/>
            <person name="Brinkac L.M."/>
            <person name="Beanan M.J."/>
            <person name="Haft D.H."/>
            <person name="Nelson W.C."/>
            <person name="Davidsen T.M."/>
            <person name="Zafar N."/>
            <person name="Zhou L."/>
            <person name="Liu J."/>
            <person name="Yuan Q."/>
            <person name="Khouri H.M."/>
            <person name="Fedorova N.B."/>
            <person name="Tran B."/>
            <person name="Russell D."/>
            <person name="Berry K.J."/>
            <person name="Utterback T.R."/>
            <person name="Van Aken S.E."/>
            <person name="Feldblyum T.V."/>
            <person name="D'Ascenzo M."/>
            <person name="Deng W.-L."/>
            <person name="Ramos A.R."/>
            <person name="Alfano J.R."/>
            <person name="Cartinhour S."/>
            <person name="Chatterjee A.K."/>
            <person name="Delaney T.P."/>
            <person name="Lazarowitz S.G."/>
            <person name="Martin G.B."/>
            <person name="Schneider D.J."/>
            <person name="Tang X."/>
            <person name="Bender C.L."/>
            <person name="White O."/>
            <person name="Fraser C.M."/>
            <person name="Collmer A."/>
        </authorList>
    </citation>
    <scope>NUCLEOTIDE SEQUENCE [LARGE SCALE GENOMIC DNA]</scope>
    <source>
        <strain>ATCC BAA-871 / DC3000</strain>
    </source>
</reference>
<proteinExistence type="inferred from homology"/>
<evidence type="ECO:0000255" key="1">
    <source>
        <dbReference type="HAMAP-Rule" id="MF_00360"/>
    </source>
</evidence>
<evidence type="ECO:0000256" key="2">
    <source>
        <dbReference type="SAM" id="MobiDB-lite"/>
    </source>
</evidence>
<evidence type="ECO:0000305" key="3"/>
<comment type="function">
    <text evidence="1">Binds together with bS18 to 16S ribosomal RNA.</text>
</comment>
<comment type="similarity">
    <text evidence="1">Belongs to the bacterial ribosomal protein bS6 family.</text>
</comment>
<feature type="chain" id="PRO_0000176821" description="Small ribosomal subunit protein bS6">
    <location>
        <begin position="1"/>
        <end position="141"/>
    </location>
</feature>
<feature type="region of interest" description="Disordered" evidence="2">
    <location>
        <begin position="97"/>
        <end position="141"/>
    </location>
</feature>
<feature type="compositionally biased region" description="Basic and acidic residues" evidence="2">
    <location>
        <begin position="103"/>
        <end position="124"/>
    </location>
</feature>
<feature type="compositionally biased region" description="Acidic residues" evidence="2">
    <location>
        <begin position="125"/>
        <end position="141"/>
    </location>
</feature>